<dbReference type="EC" id="2.7.7.6" evidence="1"/>
<dbReference type="EMBL" id="CP001132">
    <property type="protein sequence ID" value="ACH82969.1"/>
    <property type="molecule type" value="Genomic_DNA"/>
</dbReference>
<dbReference type="RefSeq" id="WP_012536208.1">
    <property type="nucleotide sequence ID" value="NC_011206.1"/>
</dbReference>
<dbReference type="SMR" id="B5EN39"/>
<dbReference type="GeneID" id="65279922"/>
<dbReference type="KEGG" id="afe:Lferr_0718"/>
<dbReference type="eggNOG" id="COG1758">
    <property type="taxonomic scope" value="Bacteria"/>
</dbReference>
<dbReference type="HOGENOM" id="CLU_125406_5_3_6"/>
<dbReference type="GO" id="GO:0000428">
    <property type="term" value="C:DNA-directed RNA polymerase complex"/>
    <property type="evidence" value="ECO:0007669"/>
    <property type="project" value="UniProtKB-KW"/>
</dbReference>
<dbReference type="GO" id="GO:0003677">
    <property type="term" value="F:DNA binding"/>
    <property type="evidence" value="ECO:0007669"/>
    <property type="project" value="UniProtKB-UniRule"/>
</dbReference>
<dbReference type="GO" id="GO:0003899">
    <property type="term" value="F:DNA-directed RNA polymerase activity"/>
    <property type="evidence" value="ECO:0007669"/>
    <property type="project" value="UniProtKB-UniRule"/>
</dbReference>
<dbReference type="GO" id="GO:0006351">
    <property type="term" value="P:DNA-templated transcription"/>
    <property type="evidence" value="ECO:0007669"/>
    <property type="project" value="UniProtKB-UniRule"/>
</dbReference>
<dbReference type="Gene3D" id="3.90.940.10">
    <property type="match status" value="1"/>
</dbReference>
<dbReference type="HAMAP" id="MF_00366">
    <property type="entry name" value="RNApol_bact_RpoZ"/>
    <property type="match status" value="1"/>
</dbReference>
<dbReference type="InterPro" id="IPR003716">
    <property type="entry name" value="DNA-dir_RNA_pol_omega"/>
</dbReference>
<dbReference type="InterPro" id="IPR006110">
    <property type="entry name" value="Pol_omega/Rpo6/RPB6"/>
</dbReference>
<dbReference type="InterPro" id="IPR036161">
    <property type="entry name" value="RPB6/omega-like_sf"/>
</dbReference>
<dbReference type="NCBIfam" id="TIGR00690">
    <property type="entry name" value="rpoZ"/>
    <property type="match status" value="1"/>
</dbReference>
<dbReference type="PANTHER" id="PTHR34476">
    <property type="entry name" value="DNA-DIRECTED RNA POLYMERASE SUBUNIT OMEGA"/>
    <property type="match status" value="1"/>
</dbReference>
<dbReference type="PANTHER" id="PTHR34476:SF1">
    <property type="entry name" value="DNA-DIRECTED RNA POLYMERASE SUBUNIT OMEGA"/>
    <property type="match status" value="1"/>
</dbReference>
<dbReference type="Pfam" id="PF01192">
    <property type="entry name" value="RNA_pol_Rpb6"/>
    <property type="match status" value="1"/>
</dbReference>
<dbReference type="SMART" id="SM01409">
    <property type="entry name" value="RNA_pol_Rpb6"/>
    <property type="match status" value="1"/>
</dbReference>
<dbReference type="SUPFAM" id="SSF63562">
    <property type="entry name" value="RPB6/omega subunit-like"/>
    <property type="match status" value="1"/>
</dbReference>
<protein>
    <recommendedName>
        <fullName evidence="1">DNA-directed RNA polymerase subunit omega</fullName>
        <shortName evidence="1">RNAP omega subunit</shortName>
        <ecNumber evidence="1">2.7.7.6</ecNumber>
    </recommendedName>
    <alternativeName>
        <fullName evidence="1">RNA polymerase omega subunit</fullName>
    </alternativeName>
    <alternativeName>
        <fullName evidence="1">Transcriptase subunit omega</fullName>
    </alternativeName>
</protein>
<sequence length="91" mass="9677">MARVTVEDCLEHVDNRFELTLVAARRARQLASGAAPEVEPGRDKNTVIALREVAAGKVSRAILDEQMPPPLPNFPGAANREATGAEDAAGE</sequence>
<comment type="function">
    <text evidence="1">Promotes RNA polymerase assembly. Latches the N- and C-terminal regions of the beta' subunit thereby facilitating its interaction with the beta and alpha subunits.</text>
</comment>
<comment type="catalytic activity">
    <reaction evidence="1">
        <text>RNA(n) + a ribonucleoside 5'-triphosphate = RNA(n+1) + diphosphate</text>
        <dbReference type="Rhea" id="RHEA:21248"/>
        <dbReference type="Rhea" id="RHEA-COMP:14527"/>
        <dbReference type="Rhea" id="RHEA-COMP:17342"/>
        <dbReference type="ChEBI" id="CHEBI:33019"/>
        <dbReference type="ChEBI" id="CHEBI:61557"/>
        <dbReference type="ChEBI" id="CHEBI:140395"/>
        <dbReference type="EC" id="2.7.7.6"/>
    </reaction>
</comment>
<comment type="subunit">
    <text evidence="1">The RNAP catalytic core consists of 2 alpha, 1 beta, 1 beta' and 1 omega subunit. When a sigma factor is associated with the core the holoenzyme is formed, which can initiate transcription.</text>
</comment>
<comment type="similarity">
    <text evidence="1">Belongs to the RNA polymerase subunit omega family.</text>
</comment>
<name>RPOZ_ACIF5</name>
<evidence type="ECO:0000255" key="1">
    <source>
        <dbReference type="HAMAP-Rule" id="MF_00366"/>
    </source>
</evidence>
<evidence type="ECO:0000256" key="2">
    <source>
        <dbReference type="SAM" id="MobiDB-lite"/>
    </source>
</evidence>
<gene>
    <name evidence="1" type="primary">rpoZ</name>
    <name type="ordered locus">Lferr_0718</name>
</gene>
<accession>B5EN39</accession>
<reference key="1">
    <citation type="submission" date="2008-08" db="EMBL/GenBank/DDBJ databases">
        <title>Complete sequence of Acidithiobacillus ferrooxidans ATCC 53993.</title>
        <authorList>
            <person name="Lucas S."/>
            <person name="Copeland A."/>
            <person name="Lapidus A."/>
            <person name="Glavina del Rio T."/>
            <person name="Dalin E."/>
            <person name="Tice H."/>
            <person name="Bruce D."/>
            <person name="Goodwin L."/>
            <person name="Pitluck S."/>
            <person name="Sims D."/>
            <person name="Brettin T."/>
            <person name="Detter J.C."/>
            <person name="Han C."/>
            <person name="Kuske C.R."/>
            <person name="Larimer F."/>
            <person name="Land M."/>
            <person name="Hauser L."/>
            <person name="Kyrpides N."/>
            <person name="Lykidis A."/>
            <person name="Borole A.P."/>
        </authorList>
    </citation>
    <scope>NUCLEOTIDE SEQUENCE [LARGE SCALE GENOMIC DNA]</scope>
    <source>
        <strain>ATCC 53993 / BNL-5-31</strain>
    </source>
</reference>
<keyword id="KW-0240">DNA-directed RNA polymerase</keyword>
<keyword id="KW-0548">Nucleotidyltransferase</keyword>
<keyword id="KW-0804">Transcription</keyword>
<keyword id="KW-0808">Transferase</keyword>
<proteinExistence type="inferred from homology"/>
<feature type="chain" id="PRO_1000121180" description="DNA-directed RNA polymerase subunit omega">
    <location>
        <begin position="1"/>
        <end position="91"/>
    </location>
</feature>
<feature type="region of interest" description="Disordered" evidence="2">
    <location>
        <begin position="66"/>
        <end position="91"/>
    </location>
</feature>
<organism>
    <name type="scientific">Acidithiobacillus ferrooxidans (strain ATCC 53993 / BNL-5-31)</name>
    <name type="common">Leptospirillum ferrooxidans (ATCC 53993)</name>
    <dbReference type="NCBI Taxonomy" id="380394"/>
    <lineage>
        <taxon>Bacteria</taxon>
        <taxon>Pseudomonadati</taxon>
        <taxon>Pseudomonadota</taxon>
        <taxon>Acidithiobacillia</taxon>
        <taxon>Acidithiobacillales</taxon>
        <taxon>Acidithiobacillaceae</taxon>
        <taxon>Acidithiobacillus</taxon>
    </lineage>
</organism>